<accession>C1C5F4</accession>
<dbReference type="EC" id="2.3.1.180" evidence="1"/>
<dbReference type="EMBL" id="CP000918">
    <property type="protein sequence ID" value="ACO17878.1"/>
    <property type="molecule type" value="Genomic_DNA"/>
</dbReference>
<dbReference type="RefSeq" id="WP_000852948.1">
    <property type="nucleotide sequence ID" value="NC_012468.1"/>
</dbReference>
<dbReference type="SMR" id="C1C5F4"/>
<dbReference type="KEGG" id="snm:SP70585_0488"/>
<dbReference type="HOGENOM" id="CLU_039592_4_1_9"/>
<dbReference type="UniPathway" id="UPA00094"/>
<dbReference type="Proteomes" id="UP000002211">
    <property type="component" value="Chromosome"/>
</dbReference>
<dbReference type="GO" id="GO:0005737">
    <property type="term" value="C:cytoplasm"/>
    <property type="evidence" value="ECO:0007669"/>
    <property type="project" value="UniProtKB-SubCell"/>
</dbReference>
<dbReference type="GO" id="GO:0004315">
    <property type="term" value="F:3-oxoacyl-[acyl-carrier-protein] synthase activity"/>
    <property type="evidence" value="ECO:0007669"/>
    <property type="project" value="InterPro"/>
</dbReference>
<dbReference type="GO" id="GO:0033818">
    <property type="term" value="F:beta-ketoacyl-acyl-carrier-protein synthase III activity"/>
    <property type="evidence" value="ECO:0007669"/>
    <property type="project" value="UniProtKB-UniRule"/>
</dbReference>
<dbReference type="GO" id="GO:0006633">
    <property type="term" value="P:fatty acid biosynthetic process"/>
    <property type="evidence" value="ECO:0007669"/>
    <property type="project" value="UniProtKB-UniRule"/>
</dbReference>
<dbReference type="CDD" id="cd00830">
    <property type="entry name" value="KAS_III"/>
    <property type="match status" value="1"/>
</dbReference>
<dbReference type="Gene3D" id="3.40.47.10">
    <property type="match status" value="1"/>
</dbReference>
<dbReference type="HAMAP" id="MF_01815">
    <property type="entry name" value="FabH"/>
    <property type="match status" value="1"/>
</dbReference>
<dbReference type="InterPro" id="IPR013747">
    <property type="entry name" value="ACP_syn_III_C"/>
</dbReference>
<dbReference type="InterPro" id="IPR013751">
    <property type="entry name" value="ACP_syn_III_N"/>
</dbReference>
<dbReference type="InterPro" id="IPR004655">
    <property type="entry name" value="FabH"/>
</dbReference>
<dbReference type="InterPro" id="IPR016039">
    <property type="entry name" value="Thiolase-like"/>
</dbReference>
<dbReference type="NCBIfam" id="TIGR00747">
    <property type="entry name" value="fabH"/>
    <property type="match status" value="1"/>
</dbReference>
<dbReference type="NCBIfam" id="NF006829">
    <property type="entry name" value="PRK09352.1"/>
    <property type="match status" value="1"/>
</dbReference>
<dbReference type="PANTHER" id="PTHR43091">
    <property type="entry name" value="3-OXOACYL-[ACYL-CARRIER-PROTEIN] SYNTHASE"/>
    <property type="match status" value="1"/>
</dbReference>
<dbReference type="PANTHER" id="PTHR43091:SF1">
    <property type="entry name" value="BETA-KETOACYL-[ACYL-CARRIER-PROTEIN] SYNTHASE III, CHLOROPLASTIC"/>
    <property type="match status" value="1"/>
</dbReference>
<dbReference type="Pfam" id="PF08545">
    <property type="entry name" value="ACP_syn_III"/>
    <property type="match status" value="1"/>
</dbReference>
<dbReference type="Pfam" id="PF08541">
    <property type="entry name" value="ACP_syn_III_C"/>
    <property type="match status" value="1"/>
</dbReference>
<dbReference type="SUPFAM" id="SSF53901">
    <property type="entry name" value="Thiolase-like"/>
    <property type="match status" value="1"/>
</dbReference>
<comment type="function">
    <text evidence="1">Catalyzes the condensation reaction of fatty acid synthesis by the addition to an acyl acceptor of two carbons from malonyl-ACP. Catalyzes the first condensation reaction which initiates fatty acid synthesis and may therefore play a role in governing the total rate of fatty acid production. Possesses both acetoacetyl-ACP synthase and acetyl transacylase activities. Its substrate specificity determines the biosynthesis of branched-chain and/or straight-chain of fatty acids.</text>
</comment>
<comment type="catalytic activity">
    <reaction evidence="1">
        <text>malonyl-[ACP] + acetyl-CoA + H(+) = 3-oxobutanoyl-[ACP] + CO2 + CoA</text>
        <dbReference type="Rhea" id="RHEA:12080"/>
        <dbReference type="Rhea" id="RHEA-COMP:9623"/>
        <dbReference type="Rhea" id="RHEA-COMP:9625"/>
        <dbReference type="ChEBI" id="CHEBI:15378"/>
        <dbReference type="ChEBI" id="CHEBI:16526"/>
        <dbReference type="ChEBI" id="CHEBI:57287"/>
        <dbReference type="ChEBI" id="CHEBI:57288"/>
        <dbReference type="ChEBI" id="CHEBI:78449"/>
        <dbReference type="ChEBI" id="CHEBI:78450"/>
        <dbReference type="EC" id="2.3.1.180"/>
    </reaction>
</comment>
<comment type="pathway">
    <text evidence="1">Lipid metabolism; fatty acid biosynthesis.</text>
</comment>
<comment type="subunit">
    <text evidence="1">Homodimer.</text>
</comment>
<comment type="subcellular location">
    <subcellularLocation>
        <location evidence="1">Cytoplasm</location>
    </subcellularLocation>
</comment>
<comment type="domain">
    <text evidence="1">The last Arg residue of the ACP-binding site is essential for the weak association between ACP/AcpP and FabH.</text>
</comment>
<comment type="similarity">
    <text evidence="1">Belongs to the thiolase-like superfamily. FabH family.</text>
</comment>
<organism>
    <name type="scientific">Streptococcus pneumoniae (strain 70585)</name>
    <dbReference type="NCBI Taxonomy" id="488221"/>
    <lineage>
        <taxon>Bacteria</taxon>
        <taxon>Bacillati</taxon>
        <taxon>Bacillota</taxon>
        <taxon>Bacilli</taxon>
        <taxon>Lactobacillales</taxon>
        <taxon>Streptococcaceae</taxon>
        <taxon>Streptococcus</taxon>
    </lineage>
</organism>
<proteinExistence type="inferred from homology"/>
<reference key="1">
    <citation type="journal article" date="2010" name="Genome Biol.">
        <title>Structure and dynamics of the pan-genome of Streptococcus pneumoniae and closely related species.</title>
        <authorList>
            <person name="Donati C."/>
            <person name="Hiller N.L."/>
            <person name="Tettelin H."/>
            <person name="Muzzi A."/>
            <person name="Croucher N.J."/>
            <person name="Angiuoli S.V."/>
            <person name="Oggioni M."/>
            <person name="Dunning Hotopp J.C."/>
            <person name="Hu F.Z."/>
            <person name="Riley D.R."/>
            <person name="Covacci A."/>
            <person name="Mitchell T.J."/>
            <person name="Bentley S.D."/>
            <person name="Kilian M."/>
            <person name="Ehrlich G.D."/>
            <person name="Rappuoli R."/>
            <person name="Moxon E.R."/>
            <person name="Masignani V."/>
        </authorList>
    </citation>
    <scope>NUCLEOTIDE SEQUENCE [LARGE SCALE GENOMIC DNA]</scope>
    <source>
        <strain>70585</strain>
    </source>
</reference>
<feature type="chain" id="PRO_1000187899" description="Beta-ketoacyl-[acyl-carrier-protein] synthase III">
    <location>
        <begin position="1"/>
        <end position="324"/>
    </location>
</feature>
<feature type="region of interest" description="ACP-binding" evidence="1">
    <location>
        <begin position="250"/>
        <end position="254"/>
    </location>
</feature>
<feature type="active site" evidence="1">
    <location>
        <position position="112"/>
    </location>
</feature>
<feature type="active site" evidence="1">
    <location>
        <position position="249"/>
    </location>
</feature>
<feature type="active site" evidence="1">
    <location>
        <position position="279"/>
    </location>
</feature>
<evidence type="ECO:0000255" key="1">
    <source>
        <dbReference type="HAMAP-Rule" id="MF_01815"/>
    </source>
</evidence>
<gene>
    <name evidence="1" type="primary">fabH</name>
    <name type="ordered locus">SP70585_0488</name>
</gene>
<keyword id="KW-0012">Acyltransferase</keyword>
<keyword id="KW-0963">Cytoplasm</keyword>
<keyword id="KW-0275">Fatty acid biosynthesis</keyword>
<keyword id="KW-0276">Fatty acid metabolism</keyword>
<keyword id="KW-0444">Lipid biosynthesis</keyword>
<keyword id="KW-0443">Lipid metabolism</keyword>
<keyword id="KW-0511">Multifunctional enzyme</keyword>
<keyword id="KW-0808">Transferase</keyword>
<sequence>MAFAKISQVAHYVPEQVVTNHDLAQIMDTNDEWISSRTGIRQRHISRTESTSDLATEVAKKLMAKAGITGEELDFIILATITPDSMMPSTAARVQANIGANKAFAFDLTAACSGFVFALSTAEKFIASGRFQKGLVIGSETLSKAVDWSDRSTAVLFGDGAGGVLLEASEQEHFLAESLNSDGSRSECLTYGHSGLHSPFSDQESADSFLKMDGRTVFDFAIRDVAKSIKQTIDESPIEVTDLDYLLLHQANDRILDKMARKIGVDRAKLPANMMEYGNTSAASIPILLSECVEQGLIPLDGSQTVLLSGFGGGLTWGTLILTI</sequence>
<name>FABH_STRP7</name>
<protein>
    <recommendedName>
        <fullName evidence="1">Beta-ketoacyl-[acyl-carrier-protein] synthase III</fullName>
        <shortName evidence="1">Beta-ketoacyl-ACP synthase III</shortName>
        <shortName evidence="1">KAS III</shortName>
        <ecNumber evidence="1">2.3.1.180</ecNumber>
    </recommendedName>
    <alternativeName>
        <fullName evidence="1">3-oxoacyl-[acyl-carrier-protein] synthase 3</fullName>
    </alternativeName>
    <alternativeName>
        <fullName evidence="1">3-oxoacyl-[acyl-carrier-protein] synthase III</fullName>
    </alternativeName>
</protein>